<dbReference type="EMBL" id="CP000936">
    <property type="protein sequence ID" value="ACA35682.1"/>
    <property type="molecule type" value="Genomic_DNA"/>
</dbReference>
<dbReference type="RefSeq" id="WP_000743629.1">
    <property type="nucleotide sequence ID" value="NC_010380.1"/>
</dbReference>
<dbReference type="SMR" id="B1I960"/>
<dbReference type="KEGG" id="spv:SPH_0451"/>
<dbReference type="HOGENOM" id="CLU_046981_0_0_9"/>
<dbReference type="Proteomes" id="UP000002163">
    <property type="component" value="Chromosome"/>
</dbReference>
<dbReference type="Gene3D" id="1.20.1570.10">
    <property type="entry name" value="dip2346 domain like"/>
    <property type="match status" value="1"/>
</dbReference>
<dbReference type="Gene3D" id="3.10.630.10">
    <property type="entry name" value="dip2346 domain like"/>
    <property type="match status" value="1"/>
</dbReference>
<dbReference type="Gene3D" id="3.40.140.40">
    <property type="entry name" value="Domain of unknown function (DUF1846), C-terminal subdomain"/>
    <property type="match status" value="1"/>
</dbReference>
<dbReference type="HAMAP" id="MF_01567">
    <property type="entry name" value="UPF0371"/>
    <property type="match status" value="1"/>
</dbReference>
<dbReference type="InterPro" id="IPR014999">
    <property type="entry name" value="DUF1846"/>
</dbReference>
<dbReference type="InterPro" id="IPR048441">
    <property type="entry name" value="DUF1846_C"/>
</dbReference>
<dbReference type="InterPro" id="IPR048496">
    <property type="entry name" value="DUF1846_N"/>
</dbReference>
<dbReference type="NCBIfam" id="NF010184">
    <property type="entry name" value="PRK13663.1"/>
    <property type="match status" value="1"/>
</dbReference>
<dbReference type="Pfam" id="PF08903">
    <property type="entry name" value="DUF1846"/>
    <property type="match status" value="1"/>
</dbReference>
<dbReference type="Pfam" id="PF20921">
    <property type="entry name" value="DUF1846_C"/>
    <property type="match status" value="1"/>
</dbReference>
<dbReference type="PIRSF" id="PIRSF033132">
    <property type="entry name" value="DUF1846"/>
    <property type="match status" value="1"/>
</dbReference>
<comment type="similarity">
    <text evidence="1">Belongs to the UPF0371 family.</text>
</comment>
<sequence length="494" mass="55125">MKKQAFSSEQYLNLQRDHILERINQFDGKLYLEFGGKMLEDFHAARVLPGYEPDNKIKLLQELKEQVEVVIAINASNIEHSKARGDLGISYDQEVLRLIDKFNELGIFVGSVVITQYAGQPAADVFRNQLEKNGIDSYLHYPIKGYPTDMDHIISPEGMGKNDYIKTSRNLIVVTAPGPGSGKLATCMSNMYHDQINGIKSGYAKFETFPVWNLPLHHPVNLAYEAATADLDDVNMIDPFHLQTYGETTVNYNRDIEIFPVLKRMLERILGKSPYSSPTDMGVNMVGFAITDDEAAVEASKQEIIRRYYQTVLDFKAEKVGEAAVKKIELLMNDLSITPADRKVAVVARQKAEETGGPALAFELPNGEIVTGKNSELFGPTAAALINAIKKSADIAKEVKLIEPEVVKPIQGLKIDHLGSRNPRLHSNEILIALAITATENPDAARAMEELGNLKGSEAHSTIILTDEDKNVLRKLGINVTFDPYYQYDRLYRK</sequence>
<accession>B1I960</accession>
<feature type="chain" id="PRO_1000199746" description="UPF0371 protein SPH_0451">
    <location>
        <begin position="1"/>
        <end position="494"/>
    </location>
</feature>
<name>Y451_STRPI</name>
<gene>
    <name type="ordered locus">SPH_0451</name>
</gene>
<evidence type="ECO:0000255" key="1">
    <source>
        <dbReference type="HAMAP-Rule" id="MF_01567"/>
    </source>
</evidence>
<proteinExistence type="inferred from homology"/>
<protein>
    <recommendedName>
        <fullName evidence="1">UPF0371 protein SPH_0451</fullName>
    </recommendedName>
</protein>
<reference key="1">
    <citation type="journal article" date="2010" name="Genome Biol.">
        <title>Structure and dynamics of the pan-genome of Streptococcus pneumoniae and closely related species.</title>
        <authorList>
            <person name="Donati C."/>
            <person name="Hiller N.L."/>
            <person name="Tettelin H."/>
            <person name="Muzzi A."/>
            <person name="Croucher N.J."/>
            <person name="Angiuoli S.V."/>
            <person name="Oggioni M."/>
            <person name="Dunning Hotopp J.C."/>
            <person name="Hu F.Z."/>
            <person name="Riley D.R."/>
            <person name="Covacci A."/>
            <person name="Mitchell T.J."/>
            <person name="Bentley S.D."/>
            <person name="Kilian M."/>
            <person name="Ehrlich G.D."/>
            <person name="Rappuoli R."/>
            <person name="Moxon E.R."/>
            <person name="Masignani V."/>
        </authorList>
    </citation>
    <scope>NUCLEOTIDE SEQUENCE [LARGE SCALE GENOMIC DNA]</scope>
    <source>
        <strain>Hungary19A-6</strain>
    </source>
</reference>
<organism>
    <name type="scientific">Streptococcus pneumoniae (strain Hungary19A-6)</name>
    <dbReference type="NCBI Taxonomy" id="487214"/>
    <lineage>
        <taxon>Bacteria</taxon>
        <taxon>Bacillati</taxon>
        <taxon>Bacillota</taxon>
        <taxon>Bacilli</taxon>
        <taxon>Lactobacillales</taxon>
        <taxon>Streptococcaceae</taxon>
        <taxon>Streptococcus</taxon>
    </lineage>
</organism>